<protein>
    <recommendedName>
        <fullName>Histone deacetylase B</fullName>
        <shortName>DdHdaB</shortName>
    </recommendedName>
    <alternativeName>
        <fullName>Type-1 histone deacetylase 2</fullName>
        <ecNumber evidence="5">3.5.1.98</ecNumber>
    </alternativeName>
</protein>
<organism>
    <name type="scientific">Dictyostelium discoideum</name>
    <name type="common">Social amoeba</name>
    <dbReference type="NCBI Taxonomy" id="44689"/>
    <lineage>
        <taxon>Eukaryota</taxon>
        <taxon>Amoebozoa</taxon>
        <taxon>Evosea</taxon>
        <taxon>Eumycetozoa</taxon>
        <taxon>Dictyostelia</taxon>
        <taxon>Dictyosteliales</taxon>
        <taxon>Dictyosteliaceae</taxon>
        <taxon>Dictyostelium</taxon>
    </lineage>
</organism>
<name>HDA12_DICDI</name>
<dbReference type="EC" id="3.5.1.98" evidence="5"/>
<dbReference type="EMBL" id="AAFI02000005">
    <property type="protein sequence ID" value="EAL72519.1"/>
    <property type="molecule type" value="Genomic_DNA"/>
</dbReference>
<dbReference type="RefSeq" id="XP_646719.1">
    <property type="nucleotide sequence ID" value="XM_641627.1"/>
</dbReference>
<dbReference type="SMR" id="Q55BW2"/>
<dbReference type="FunCoup" id="Q55BW2">
    <property type="interactions" value="208"/>
</dbReference>
<dbReference type="STRING" id="44689.Q55BW2"/>
<dbReference type="PaxDb" id="44689-DDB0237652"/>
<dbReference type="EnsemblProtists" id="EAL72519">
    <property type="protein sequence ID" value="EAL72519"/>
    <property type="gene ID" value="DDB_G0270338"/>
</dbReference>
<dbReference type="GeneID" id="8617692"/>
<dbReference type="KEGG" id="ddi:DDB_G0270338"/>
<dbReference type="dictyBase" id="DDB_G0270338">
    <property type="gene designation" value="hdaB"/>
</dbReference>
<dbReference type="VEuPathDB" id="AmoebaDB:DDB_G0270338"/>
<dbReference type="eggNOG" id="KOG1342">
    <property type="taxonomic scope" value="Eukaryota"/>
</dbReference>
<dbReference type="HOGENOM" id="CLU_007727_7_4_1"/>
<dbReference type="InParanoid" id="Q55BW2"/>
<dbReference type="OMA" id="DDADERC"/>
<dbReference type="PhylomeDB" id="Q55BW2"/>
<dbReference type="Reactome" id="R-DDI-9701898">
    <property type="pathway name" value="STAT3 nuclear events downstream of ALK signaling"/>
</dbReference>
<dbReference type="PRO" id="PR:Q55BW2"/>
<dbReference type="Proteomes" id="UP000002195">
    <property type="component" value="Chromosome 1"/>
</dbReference>
<dbReference type="GO" id="GO:0005737">
    <property type="term" value="C:cytoplasm"/>
    <property type="evidence" value="ECO:0007669"/>
    <property type="project" value="UniProtKB-SubCell"/>
</dbReference>
<dbReference type="GO" id="GO:0005634">
    <property type="term" value="C:nucleus"/>
    <property type="evidence" value="ECO:0000314"/>
    <property type="project" value="dictyBase"/>
</dbReference>
<dbReference type="GO" id="GO:0004407">
    <property type="term" value="F:histone deacetylase activity"/>
    <property type="evidence" value="ECO:0000314"/>
    <property type="project" value="dictyBase"/>
</dbReference>
<dbReference type="GO" id="GO:0141221">
    <property type="term" value="F:histone deacetylase activity, hydrolytic mechanism"/>
    <property type="evidence" value="ECO:0007669"/>
    <property type="project" value="UniProtKB-EC"/>
</dbReference>
<dbReference type="GO" id="GO:0046872">
    <property type="term" value="F:metal ion binding"/>
    <property type="evidence" value="ECO:0007669"/>
    <property type="project" value="UniProtKB-KW"/>
</dbReference>
<dbReference type="GO" id="GO:0040029">
    <property type="term" value="P:epigenetic regulation of gene expression"/>
    <property type="evidence" value="ECO:0000318"/>
    <property type="project" value="GO_Central"/>
</dbReference>
<dbReference type="GO" id="GO:0043934">
    <property type="term" value="P:sporulation"/>
    <property type="evidence" value="ECO:0000315"/>
    <property type="project" value="dictyBase"/>
</dbReference>
<dbReference type="FunFam" id="3.40.800.20:FF:000001">
    <property type="entry name" value="Histone deacetylase"/>
    <property type="match status" value="1"/>
</dbReference>
<dbReference type="Gene3D" id="3.40.800.20">
    <property type="entry name" value="Histone deacetylase domain"/>
    <property type="match status" value="1"/>
</dbReference>
<dbReference type="InterPro" id="IPR050284">
    <property type="entry name" value="HDAC_PDAC"/>
</dbReference>
<dbReference type="InterPro" id="IPR000286">
    <property type="entry name" value="His_deacetylse"/>
</dbReference>
<dbReference type="InterPro" id="IPR003084">
    <property type="entry name" value="His_deacetylse_1"/>
</dbReference>
<dbReference type="InterPro" id="IPR023801">
    <property type="entry name" value="His_deacetylse_dom"/>
</dbReference>
<dbReference type="InterPro" id="IPR037138">
    <property type="entry name" value="His_deacetylse_dom_sf"/>
</dbReference>
<dbReference type="InterPro" id="IPR023696">
    <property type="entry name" value="Ureohydrolase_dom_sf"/>
</dbReference>
<dbReference type="PANTHER" id="PTHR10625:SF36">
    <property type="entry name" value="HISTONE DEACETYLASE 3"/>
    <property type="match status" value="1"/>
</dbReference>
<dbReference type="PANTHER" id="PTHR10625">
    <property type="entry name" value="HISTONE DEACETYLASE HDAC1-RELATED"/>
    <property type="match status" value="1"/>
</dbReference>
<dbReference type="Pfam" id="PF00850">
    <property type="entry name" value="Hist_deacetyl"/>
    <property type="match status" value="1"/>
</dbReference>
<dbReference type="PIRSF" id="PIRSF037913">
    <property type="entry name" value="His_deacetylse_1"/>
    <property type="match status" value="1"/>
</dbReference>
<dbReference type="PRINTS" id="PR01270">
    <property type="entry name" value="HDASUPER"/>
</dbReference>
<dbReference type="PRINTS" id="PR01271">
    <property type="entry name" value="HISDACETLASE"/>
</dbReference>
<dbReference type="SUPFAM" id="SSF52768">
    <property type="entry name" value="Arginase/deacetylase"/>
    <property type="match status" value="1"/>
</dbReference>
<sequence length="422" mass="48641">MEYNTILNNTSKTRVCYFFDQDVGNYFYGPYHPMKPHRLCLTNNLVLNYGLHKKMHLYKARPADAEDMLKFHSEDYVDFLERVTPENINEWKDVKRFHIGEDCPVFPGLYDYCSIYSGGSIEGALKLNHRMYDIAINWSGGLHHARKDEASGFCYVNDIVLAILELLKFHARVLYIDIDVHHGDGVQEAFYLTDRVMTVSFHKFGGDFFPGTGDIDEIGAKTGKLYSVNVPLADGIDDKNYLNIFKPVIQGVMDYYRPSVIVLQCGADSLRFDRLGCFNLTIKGHAECVRFVKSFNIPTLVLGGGGYTVRNVARCWTYETSVCVDTEVNNELPYNDYIQFYSPDFQLIPDYTGLPFKYENANTKSYLESLRIKILENLRILQWAPSVQIQDVPPDIMPIDFDRDEDSKENMDKRKKKHNDFS</sequence>
<proteinExistence type="evidence at transcript level"/>
<comment type="function">
    <text evidence="1 3">Responsible for the deacetylation of lysine residues on the N-terminal part of the core histones (H2A, H2B, H3 and H4). Histone deacetylation plays an important role in transcriptional regulation, cell cycle progression and developmental events. Histone deacetylases act via the formation of large multiprotein complexes (By similarity). May play a role in the regulation of the timing of gene expression during the development and in the definition aspects of the phenotype that mediate social behavior in genetically heterogeneous groups.</text>
</comment>
<comment type="catalytic activity">
    <reaction evidence="5">
        <text>N(6)-acetyl-L-lysyl-[histone] + H2O = L-lysyl-[histone] + acetate</text>
        <dbReference type="Rhea" id="RHEA:58196"/>
        <dbReference type="Rhea" id="RHEA-COMP:9845"/>
        <dbReference type="Rhea" id="RHEA-COMP:11338"/>
        <dbReference type="ChEBI" id="CHEBI:15377"/>
        <dbReference type="ChEBI" id="CHEBI:29969"/>
        <dbReference type="ChEBI" id="CHEBI:30089"/>
        <dbReference type="ChEBI" id="CHEBI:61930"/>
        <dbReference type="EC" id="3.5.1.98"/>
    </reaction>
    <physiologicalReaction direction="left-to-right" evidence="5">
        <dbReference type="Rhea" id="RHEA:58197"/>
    </physiologicalReaction>
</comment>
<comment type="activity regulation">
    <text evidence="3">Its activity is inhibited by trichostatin A (TSA), a well known histone deacetylase inhibitor. Cytosolic activity is refractory to inhibition by TSA, while the nuclear activity is inhibited completely.</text>
</comment>
<comment type="subcellular location">
    <subcellularLocation>
        <location evidence="3">Nucleus</location>
    </subcellularLocation>
    <subcellularLocation>
        <location evidence="3">Cytoplasm</location>
    </subcellularLocation>
</comment>
<comment type="developmental stage">
    <text evidence="3">Expressed throughout growth and development.</text>
</comment>
<comment type="disruption phenotype">
    <text evidence="3">Develop normally but when mixed with wild type cells they sporulate less efficiently than the wild type. Do not show major alterations in gross histone acetylation levels.</text>
</comment>
<comment type="similarity">
    <text evidence="4">Belongs to the histone deacetylase family. HD type 1 subfamily.</text>
</comment>
<reference key="1">
    <citation type="journal article" date="2005" name="Nature">
        <title>The genome of the social amoeba Dictyostelium discoideum.</title>
        <authorList>
            <person name="Eichinger L."/>
            <person name="Pachebat J.A."/>
            <person name="Gloeckner G."/>
            <person name="Rajandream M.A."/>
            <person name="Sucgang R."/>
            <person name="Berriman M."/>
            <person name="Song J."/>
            <person name="Olsen R."/>
            <person name="Szafranski K."/>
            <person name="Xu Q."/>
            <person name="Tunggal B."/>
            <person name="Kummerfeld S."/>
            <person name="Madera M."/>
            <person name="Konfortov B.A."/>
            <person name="Rivero F."/>
            <person name="Bankier A.T."/>
            <person name="Lehmann R."/>
            <person name="Hamlin N."/>
            <person name="Davies R."/>
            <person name="Gaudet P."/>
            <person name="Fey P."/>
            <person name="Pilcher K."/>
            <person name="Chen G."/>
            <person name="Saunders D."/>
            <person name="Sodergren E.J."/>
            <person name="Davis P."/>
            <person name="Kerhornou A."/>
            <person name="Nie X."/>
            <person name="Hall N."/>
            <person name="Anjard C."/>
            <person name="Hemphill L."/>
            <person name="Bason N."/>
            <person name="Farbrother P."/>
            <person name="Desany B."/>
            <person name="Just E."/>
            <person name="Morio T."/>
            <person name="Rost R."/>
            <person name="Churcher C.M."/>
            <person name="Cooper J."/>
            <person name="Haydock S."/>
            <person name="van Driessche N."/>
            <person name="Cronin A."/>
            <person name="Goodhead I."/>
            <person name="Muzny D.M."/>
            <person name="Mourier T."/>
            <person name="Pain A."/>
            <person name="Lu M."/>
            <person name="Harper D."/>
            <person name="Lindsay R."/>
            <person name="Hauser H."/>
            <person name="James K.D."/>
            <person name="Quiles M."/>
            <person name="Madan Babu M."/>
            <person name="Saito T."/>
            <person name="Buchrieser C."/>
            <person name="Wardroper A."/>
            <person name="Felder M."/>
            <person name="Thangavelu M."/>
            <person name="Johnson D."/>
            <person name="Knights A."/>
            <person name="Loulseged H."/>
            <person name="Mungall K.L."/>
            <person name="Oliver K."/>
            <person name="Price C."/>
            <person name="Quail M.A."/>
            <person name="Urushihara H."/>
            <person name="Hernandez J."/>
            <person name="Rabbinowitsch E."/>
            <person name="Steffen D."/>
            <person name="Sanders M."/>
            <person name="Ma J."/>
            <person name="Kohara Y."/>
            <person name="Sharp S."/>
            <person name="Simmonds M.N."/>
            <person name="Spiegler S."/>
            <person name="Tivey A."/>
            <person name="Sugano S."/>
            <person name="White B."/>
            <person name="Walker D."/>
            <person name="Woodward J.R."/>
            <person name="Winckler T."/>
            <person name="Tanaka Y."/>
            <person name="Shaulsky G."/>
            <person name="Schleicher M."/>
            <person name="Weinstock G.M."/>
            <person name="Rosenthal A."/>
            <person name="Cox E.C."/>
            <person name="Chisholm R.L."/>
            <person name="Gibbs R.A."/>
            <person name="Loomis W.F."/>
            <person name="Platzer M."/>
            <person name="Kay R.R."/>
            <person name="Williams J.G."/>
            <person name="Dear P.H."/>
            <person name="Noegel A.A."/>
            <person name="Barrell B.G."/>
            <person name="Kuspa A."/>
        </authorList>
    </citation>
    <scope>NUCLEOTIDE SEQUENCE [LARGE SCALE GENOMIC DNA]</scope>
    <source>
        <strain>AX4</strain>
    </source>
</reference>
<reference key="2">
    <citation type="journal article" date="2009" name="J. Mol. Biol.">
        <title>Histone deacetylases regulate multicellular development in the social amoeba Dictyostelium discoideum.</title>
        <authorList>
            <person name="Sawarkar R."/>
            <person name="Visweswariah S.S."/>
            <person name="Nellen W."/>
            <person name="Nanjundiah V."/>
        </authorList>
    </citation>
    <scope>FUNCTION</scope>
    <scope>ACTIVITY REGULATION</scope>
    <scope>DISRUPTION PHENOTYPE</scope>
    <scope>DEVELOPMENTAL STAGE</scope>
    <scope>SUBCELLULAR LOCATION</scope>
</reference>
<keyword id="KW-0156">Chromatin regulator</keyword>
<keyword id="KW-0963">Cytoplasm</keyword>
<keyword id="KW-0378">Hydrolase</keyword>
<keyword id="KW-0479">Metal-binding</keyword>
<keyword id="KW-0539">Nucleus</keyword>
<keyword id="KW-1185">Reference proteome</keyword>
<keyword id="KW-0678">Repressor</keyword>
<keyword id="KW-0804">Transcription</keyword>
<keyword id="KW-0805">Transcription regulation</keyword>
<gene>
    <name type="primary">hdaB</name>
    <name type="ORF">DDB_G0270338</name>
</gene>
<feature type="chain" id="PRO_0000331370" description="Histone deacetylase B">
    <location>
        <begin position="1"/>
        <end position="422"/>
    </location>
</feature>
<feature type="region of interest" description="Disordered" evidence="2">
    <location>
        <begin position="399"/>
        <end position="422"/>
    </location>
</feature>
<feature type="compositionally biased region" description="Basic residues" evidence="2">
    <location>
        <begin position="413"/>
        <end position="422"/>
    </location>
</feature>
<feature type="active site" description="Proton acceptor" evidence="1">
    <location>
        <position position="144"/>
    </location>
</feature>
<feature type="binding site" evidence="1">
    <location>
        <position position="102"/>
    </location>
    <ligand>
        <name>substrate</name>
    </ligand>
</feature>
<feature type="binding site" evidence="1">
    <location>
        <position position="152"/>
    </location>
    <ligand>
        <name>substrate</name>
    </ligand>
</feature>
<feature type="binding site" evidence="1">
    <location>
        <position position="179"/>
    </location>
    <ligand>
        <name>a divalent metal cation</name>
        <dbReference type="ChEBI" id="CHEBI:60240"/>
    </ligand>
</feature>
<feature type="binding site" evidence="1">
    <location>
        <position position="181"/>
    </location>
    <ligand>
        <name>a divalent metal cation</name>
        <dbReference type="ChEBI" id="CHEBI:60240"/>
    </ligand>
</feature>
<feature type="binding site" evidence="1">
    <location>
        <position position="268"/>
    </location>
    <ligand>
        <name>a divalent metal cation</name>
        <dbReference type="ChEBI" id="CHEBI:60240"/>
    </ligand>
</feature>
<feature type="binding site" evidence="1">
    <location>
        <position position="307"/>
    </location>
    <ligand>
        <name>substrate</name>
    </ligand>
</feature>
<accession>Q55BW2</accession>
<evidence type="ECO:0000250" key="1"/>
<evidence type="ECO:0000256" key="2">
    <source>
        <dbReference type="SAM" id="MobiDB-lite"/>
    </source>
</evidence>
<evidence type="ECO:0000269" key="3">
    <source>
    </source>
</evidence>
<evidence type="ECO:0000305" key="4"/>
<evidence type="ECO:0000305" key="5">
    <source>
    </source>
</evidence>